<evidence type="ECO:0000255" key="1">
    <source>
        <dbReference type="HAMAP-Rule" id="MF_01551"/>
    </source>
</evidence>
<proteinExistence type="inferred from homology"/>
<protein>
    <recommendedName>
        <fullName evidence="1">Ribosomal RNA large subunit methyltransferase M</fullName>
        <ecNumber evidence="1">2.1.1.186</ecNumber>
    </recommendedName>
    <alternativeName>
        <fullName evidence="1">23S rRNA (cytidine2498-2'-O)-methyltransferase</fullName>
    </alternativeName>
    <alternativeName>
        <fullName evidence="1">23S rRNA 2'-O-ribose methyltransferase RlmM</fullName>
    </alternativeName>
</protein>
<accession>Q02K46</accession>
<feature type="chain" id="PRO_0000314525" description="Ribosomal RNA large subunit methyltransferase M">
    <location>
        <begin position="1"/>
        <end position="352"/>
    </location>
</feature>
<feature type="active site" description="Proton acceptor" evidence="1">
    <location>
        <position position="301"/>
    </location>
</feature>
<feature type="binding site" evidence="1">
    <location>
        <position position="184"/>
    </location>
    <ligand>
        <name>S-adenosyl-L-methionine</name>
        <dbReference type="ChEBI" id="CHEBI:59789"/>
    </ligand>
</feature>
<feature type="binding site" evidence="1">
    <location>
        <begin position="217"/>
        <end position="220"/>
    </location>
    <ligand>
        <name>S-adenosyl-L-methionine</name>
        <dbReference type="ChEBI" id="CHEBI:59789"/>
    </ligand>
</feature>
<feature type="binding site" evidence="1">
    <location>
        <position position="236"/>
    </location>
    <ligand>
        <name>S-adenosyl-L-methionine</name>
        <dbReference type="ChEBI" id="CHEBI:59789"/>
    </ligand>
</feature>
<feature type="binding site" evidence="1">
    <location>
        <position position="256"/>
    </location>
    <ligand>
        <name>S-adenosyl-L-methionine</name>
        <dbReference type="ChEBI" id="CHEBI:59789"/>
    </ligand>
</feature>
<feature type="binding site" evidence="1">
    <location>
        <position position="272"/>
    </location>
    <ligand>
        <name>S-adenosyl-L-methionine</name>
        <dbReference type="ChEBI" id="CHEBI:59789"/>
    </ligand>
</feature>
<comment type="function">
    <text evidence="1">Catalyzes the 2'-O-methylation at nucleotide C2498 in 23S rRNA.</text>
</comment>
<comment type="catalytic activity">
    <reaction evidence="1">
        <text>cytidine(2498) in 23S rRNA + S-adenosyl-L-methionine = 2'-O-methylcytidine(2498) in 23S rRNA + S-adenosyl-L-homocysteine + H(+)</text>
        <dbReference type="Rhea" id="RHEA:42788"/>
        <dbReference type="Rhea" id="RHEA-COMP:10244"/>
        <dbReference type="Rhea" id="RHEA-COMP:10245"/>
        <dbReference type="ChEBI" id="CHEBI:15378"/>
        <dbReference type="ChEBI" id="CHEBI:57856"/>
        <dbReference type="ChEBI" id="CHEBI:59789"/>
        <dbReference type="ChEBI" id="CHEBI:74495"/>
        <dbReference type="ChEBI" id="CHEBI:82748"/>
        <dbReference type="EC" id="2.1.1.186"/>
    </reaction>
</comment>
<comment type="subunit">
    <text evidence="1">Monomer.</text>
</comment>
<comment type="subcellular location">
    <subcellularLocation>
        <location evidence="1">Cytoplasm</location>
    </subcellularLocation>
</comment>
<comment type="similarity">
    <text evidence="1">Belongs to the class I-like SAM-binding methyltransferase superfamily. RNA methyltransferase RlmE family. RlmM subfamily.</text>
</comment>
<reference key="1">
    <citation type="journal article" date="2006" name="Genome Biol.">
        <title>Genomic analysis reveals that Pseudomonas aeruginosa virulence is combinatorial.</title>
        <authorList>
            <person name="Lee D.G."/>
            <person name="Urbach J.M."/>
            <person name="Wu G."/>
            <person name="Liberati N.T."/>
            <person name="Feinbaum R.L."/>
            <person name="Miyata S."/>
            <person name="Diggins L.T."/>
            <person name="He J."/>
            <person name="Saucier M."/>
            <person name="Deziel E."/>
            <person name="Friedman L."/>
            <person name="Li L."/>
            <person name="Grills G."/>
            <person name="Montgomery K."/>
            <person name="Kucherlapati R."/>
            <person name="Rahme L.G."/>
            <person name="Ausubel F.M."/>
        </authorList>
    </citation>
    <scope>NUCLEOTIDE SEQUENCE [LARGE SCALE GENOMIC DNA]</scope>
    <source>
        <strain>UCBPP-PA14</strain>
    </source>
</reference>
<name>RLMM_PSEAB</name>
<organism>
    <name type="scientific">Pseudomonas aeruginosa (strain UCBPP-PA14)</name>
    <dbReference type="NCBI Taxonomy" id="208963"/>
    <lineage>
        <taxon>Bacteria</taxon>
        <taxon>Pseudomonadati</taxon>
        <taxon>Pseudomonadota</taxon>
        <taxon>Gammaproteobacteria</taxon>
        <taxon>Pseudomonadales</taxon>
        <taxon>Pseudomonadaceae</taxon>
        <taxon>Pseudomonas</taxon>
    </lineage>
</organism>
<sequence>MNTLLMHCRPGFEGEVCAEIAEHAATLEIPGYAKSKPASAHVEFVCQDADGAERLMRRLRFADLIFPRQWARGPGFIELPESQRIEVLLAELASYPVCGSLWLEVLDTNAGKEVSTFCRKFEKPLRAALVKAGRLQEDPALPRLLLTFRSGREVFVGLAEPRNSALWPMGIPRLKFPREAPSRSTLKLEEAWHQFIPRSEWDKRLAPDMLAVDLGAAPGGWTWQLVNREMRVTAVDNGPMAENLMYSGLVDHQKVDGYQYRPRQRVDWMVCDIVEKPARTGALIETWIGEGLCREAVVNLKLPMKQRYAEVRKILQRLRESFDARGLKVVIGCKQLYHDREEVTCHLRRLER</sequence>
<keyword id="KW-0963">Cytoplasm</keyword>
<keyword id="KW-0489">Methyltransferase</keyword>
<keyword id="KW-0698">rRNA processing</keyword>
<keyword id="KW-0949">S-adenosyl-L-methionine</keyword>
<keyword id="KW-0808">Transferase</keyword>
<gene>
    <name evidence="1" type="primary">rlmM</name>
    <name type="ordered locus">PA14_44280</name>
</gene>
<dbReference type="EC" id="2.1.1.186" evidence="1"/>
<dbReference type="EMBL" id="CP000438">
    <property type="protein sequence ID" value="ABJ10742.1"/>
    <property type="molecule type" value="Genomic_DNA"/>
</dbReference>
<dbReference type="RefSeq" id="WP_003110971.1">
    <property type="nucleotide sequence ID" value="NZ_CP034244.1"/>
</dbReference>
<dbReference type="SMR" id="Q02K46"/>
<dbReference type="KEGG" id="pau:PA14_44280"/>
<dbReference type="PseudoCAP" id="PA14_44280"/>
<dbReference type="HOGENOM" id="CLU_043780_0_0_6"/>
<dbReference type="BioCyc" id="PAER208963:G1G74-3714-MONOMER"/>
<dbReference type="Proteomes" id="UP000000653">
    <property type="component" value="Chromosome"/>
</dbReference>
<dbReference type="GO" id="GO:0005737">
    <property type="term" value="C:cytoplasm"/>
    <property type="evidence" value="ECO:0007669"/>
    <property type="project" value="UniProtKB-SubCell"/>
</dbReference>
<dbReference type="GO" id="GO:0008757">
    <property type="term" value="F:S-adenosylmethionine-dependent methyltransferase activity"/>
    <property type="evidence" value="ECO:0007669"/>
    <property type="project" value="UniProtKB-UniRule"/>
</dbReference>
<dbReference type="GO" id="GO:0032259">
    <property type="term" value="P:methylation"/>
    <property type="evidence" value="ECO:0007669"/>
    <property type="project" value="UniProtKB-KW"/>
</dbReference>
<dbReference type="GO" id="GO:0006364">
    <property type="term" value="P:rRNA processing"/>
    <property type="evidence" value="ECO:0007669"/>
    <property type="project" value="UniProtKB-UniRule"/>
</dbReference>
<dbReference type="Gene3D" id="3.30.2300.20">
    <property type="match status" value="1"/>
</dbReference>
<dbReference type="Gene3D" id="3.30.70.2810">
    <property type="match status" value="1"/>
</dbReference>
<dbReference type="Gene3D" id="3.40.50.150">
    <property type="entry name" value="Vaccinia Virus protein VP39"/>
    <property type="match status" value="1"/>
</dbReference>
<dbReference type="HAMAP" id="MF_01551">
    <property type="entry name" value="23SrRNA_methyltr_M"/>
    <property type="match status" value="1"/>
</dbReference>
<dbReference type="InterPro" id="IPR040739">
    <property type="entry name" value="RlmM_FDX"/>
</dbReference>
<dbReference type="InterPro" id="IPR048646">
    <property type="entry name" value="RlmM_THUMP-like"/>
</dbReference>
<dbReference type="InterPro" id="IPR002877">
    <property type="entry name" value="RNA_MeTrfase_FtsJ_dom"/>
</dbReference>
<dbReference type="InterPro" id="IPR011224">
    <property type="entry name" value="rRNA_MeTrfase_M"/>
</dbReference>
<dbReference type="InterPro" id="IPR029063">
    <property type="entry name" value="SAM-dependent_MTases_sf"/>
</dbReference>
<dbReference type="NCBIfam" id="NF008734">
    <property type="entry name" value="PRK11760.1"/>
    <property type="match status" value="1"/>
</dbReference>
<dbReference type="PANTHER" id="PTHR37524">
    <property type="entry name" value="RIBOSOMAL RNA LARGE SUBUNIT METHYLTRANSFERASE M"/>
    <property type="match status" value="1"/>
</dbReference>
<dbReference type="PANTHER" id="PTHR37524:SF2">
    <property type="entry name" value="RIBOSOMAL RNA METHYLTRANSFERASE FTSJ DOMAIN-CONTAINING PROTEIN"/>
    <property type="match status" value="1"/>
</dbReference>
<dbReference type="Pfam" id="PF01728">
    <property type="entry name" value="FtsJ"/>
    <property type="match status" value="1"/>
</dbReference>
<dbReference type="Pfam" id="PF18125">
    <property type="entry name" value="RlmM_FDX"/>
    <property type="match status" value="1"/>
</dbReference>
<dbReference type="Pfam" id="PF21239">
    <property type="entry name" value="RLMM_N"/>
    <property type="match status" value="1"/>
</dbReference>
<dbReference type="PIRSF" id="PIRSF028774">
    <property type="entry name" value="UCP028774"/>
    <property type="match status" value="1"/>
</dbReference>
<dbReference type="SUPFAM" id="SSF53335">
    <property type="entry name" value="S-adenosyl-L-methionine-dependent methyltransferases"/>
    <property type="match status" value="1"/>
</dbReference>